<protein>
    <recommendedName>
        <fullName evidence="1">Pyrimidine/purine nucleoside phosphorylase</fullName>
        <ecNumber evidence="1">2.4.2.1</ecNumber>
        <ecNumber evidence="1">2.4.2.2</ecNumber>
    </recommendedName>
    <alternativeName>
        <fullName evidence="1">Adenosine phosphorylase</fullName>
    </alternativeName>
    <alternativeName>
        <fullName evidence="1">Cytidine phosphorylase</fullName>
    </alternativeName>
    <alternativeName>
        <fullName evidence="1">Guanosine phosphorylase</fullName>
    </alternativeName>
    <alternativeName>
        <fullName evidence="1">Inosine phosphorylase</fullName>
    </alternativeName>
    <alternativeName>
        <fullName evidence="1">Thymidine phosphorylase</fullName>
    </alternativeName>
    <alternativeName>
        <fullName evidence="1">Uridine phosphorylase</fullName>
    </alternativeName>
    <alternativeName>
        <fullName evidence="1">Xanthosine phosphorylase</fullName>
    </alternativeName>
</protein>
<reference key="1">
    <citation type="journal article" date="2002" name="Nature">
        <title>Genome sequence of the plant pathogen Ralstonia solanacearum.</title>
        <authorList>
            <person name="Salanoubat M."/>
            <person name="Genin S."/>
            <person name="Artiguenave F."/>
            <person name="Gouzy J."/>
            <person name="Mangenot S."/>
            <person name="Arlat M."/>
            <person name="Billault A."/>
            <person name="Brottier P."/>
            <person name="Camus J.-C."/>
            <person name="Cattolico L."/>
            <person name="Chandler M."/>
            <person name="Choisne N."/>
            <person name="Claudel-Renard C."/>
            <person name="Cunnac S."/>
            <person name="Demange N."/>
            <person name="Gaspin C."/>
            <person name="Lavie M."/>
            <person name="Moisan A."/>
            <person name="Robert C."/>
            <person name="Saurin W."/>
            <person name="Schiex T."/>
            <person name="Siguier P."/>
            <person name="Thebault P."/>
            <person name="Whalen M."/>
            <person name="Wincker P."/>
            <person name="Levy M."/>
            <person name="Weissenbach J."/>
            <person name="Boucher C.A."/>
        </authorList>
    </citation>
    <scope>NUCLEOTIDE SEQUENCE [LARGE SCALE GENOMIC DNA]</scope>
    <source>
        <strain>ATCC BAA-1114 / GMI1000</strain>
    </source>
</reference>
<feature type="chain" id="PRO_0000211776" description="Pyrimidine/purine nucleoside phosphorylase">
    <location>
        <begin position="1"/>
        <end position="105"/>
    </location>
</feature>
<comment type="function">
    <text evidence="1">Catalyzes the phosphorolysis of diverse nucleosides, yielding D-ribose 1-phosphate and the respective free bases. Can use uridine, adenosine, guanosine, cytidine, thymidine, inosine and xanthosine as substrates. Also catalyzes the reverse reactions.</text>
</comment>
<comment type="catalytic activity">
    <reaction evidence="1">
        <text>a purine D-ribonucleoside + phosphate = a purine nucleobase + alpha-D-ribose 1-phosphate</text>
        <dbReference type="Rhea" id="RHEA:19805"/>
        <dbReference type="ChEBI" id="CHEBI:26386"/>
        <dbReference type="ChEBI" id="CHEBI:43474"/>
        <dbReference type="ChEBI" id="CHEBI:57720"/>
        <dbReference type="ChEBI" id="CHEBI:142355"/>
        <dbReference type="EC" id="2.4.2.1"/>
    </reaction>
</comment>
<comment type="catalytic activity">
    <reaction evidence="1">
        <text>adenosine + phosphate = alpha-D-ribose 1-phosphate + adenine</text>
        <dbReference type="Rhea" id="RHEA:27642"/>
        <dbReference type="ChEBI" id="CHEBI:16335"/>
        <dbReference type="ChEBI" id="CHEBI:16708"/>
        <dbReference type="ChEBI" id="CHEBI:43474"/>
        <dbReference type="ChEBI" id="CHEBI:57720"/>
        <dbReference type="EC" id="2.4.2.1"/>
    </reaction>
</comment>
<comment type="catalytic activity">
    <reaction evidence="1">
        <text>cytidine + phosphate = cytosine + alpha-D-ribose 1-phosphate</text>
        <dbReference type="Rhea" id="RHEA:52540"/>
        <dbReference type="ChEBI" id="CHEBI:16040"/>
        <dbReference type="ChEBI" id="CHEBI:17562"/>
        <dbReference type="ChEBI" id="CHEBI:43474"/>
        <dbReference type="ChEBI" id="CHEBI:57720"/>
        <dbReference type="EC" id="2.4.2.2"/>
    </reaction>
</comment>
<comment type="catalytic activity">
    <reaction evidence="1">
        <text>guanosine + phosphate = alpha-D-ribose 1-phosphate + guanine</text>
        <dbReference type="Rhea" id="RHEA:13233"/>
        <dbReference type="ChEBI" id="CHEBI:16235"/>
        <dbReference type="ChEBI" id="CHEBI:16750"/>
        <dbReference type="ChEBI" id="CHEBI:43474"/>
        <dbReference type="ChEBI" id="CHEBI:57720"/>
        <dbReference type="EC" id="2.4.2.1"/>
    </reaction>
</comment>
<comment type="catalytic activity">
    <reaction evidence="1">
        <text>inosine + phosphate = alpha-D-ribose 1-phosphate + hypoxanthine</text>
        <dbReference type="Rhea" id="RHEA:27646"/>
        <dbReference type="ChEBI" id="CHEBI:17368"/>
        <dbReference type="ChEBI" id="CHEBI:17596"/>
        <dbReference type="ChEBI" id="CHEBI:43474"/>
        <dbReference type="ChEBI" id="CHEBI:57720"/>
        <dbReference type="EC" id="2.4.2.1"/>
    </reaction>
</comment>
<comment type="catalytic activity">
    <reaction evidence="1">
        <text>thymidine + phosphate = 2-deoxy-alpha-D-ribose 1-phosphate + thymine</text>
        <dbReference type="Rhea" id="RHEA:16037"/>
        <dbReference type="ChEBI" id="CHEBI:17748"/>
        <dbReference type="ChEBI" id="CHEBI:17821"/>
        <dbReference type="ChEBI" id="CHEBI:43474"/>
        <dbReference type="ChEBI" id="CHEBI:57259"/>
        <dbReference type="EC" id="2.4.2.2"/>
    </reaction>
</comment>
<comment type="catalytic activity">
    <reaction evidence="1">
        <text>uridine + phosphate = alpha-D-ribose 1-phosphate + uracil</text>
        <dbReference type="Rhea" id="RHEA:24388"/>
        <dbReference type="ChEBI" id="CHEBI:16704"/>
        <dbReference type="ChEBI" id="CHEBI:17568"/>
        <dbReference type="ChEBI" id="CHEBI:43474"/>
        <dbReference type="ChEBI" id="CHEBI:57720"/>
        <dbReference type="EC" id="2.4.2.2"/>
    </reaction>
</comment>
<comment type="catalytic activity">
    <reaction evidence="1">
        <text>xanthosine + phosphate = alpha-D-ribose 1-phosphate + xanthine</text>
        <dbReference type="Rhea" id="RHEA:27638"/>
        <dbReference type="ChEBI" id="CHEBI:17712"/>
        <dbReference type="ChEBI" id="CHEBI:18107"/>
        <dbReference type="ChEBI" id="CHEBI:43474"/>
        <dbReference type="ChEBI" id="CHEBI:57720"/>
        <dbReference type="EC" id="2.4.2.1"/>
    </reaction>
</comment>
<comment type="similarity">
    <text evidence="1">Belongs to the nucleoside phosphorylase PpnP family.</text>
</comment>
<comment type="sequence caution" evidence="2">
    <conflict type="erroneous initiation">
        <sequence resource="EMBL-CDS" id="CAD16259"/>
    </conflict>
</comment>
<proteinExistence type="inferred from homology"/>
<accession>Q8XWC2</accession>
<organism>
    <name type="scientific">Ralstonia nicotianae (strain ATCC BAA-1114 / GMI1000)</name>
    <name type="common">Ralstonia solanacearum</name>
    <dbReference type="NCBI Taxonomy" id="267608"/>
    <lineage>
        <taxon>Bacteria</taxon>
        <taxon>Pseudomonadati</taxon>
        <taxon>Pseudomonadota</taxon>
        <taxon>Betaproteobacteria</taxon>
        <taxon>Burkholderiales</taxon>
        <taxon>Burkholderiaceae</taxon>
        <taxon>Ralstonia</taxon>
        <taxon>Ralstonia solanacearum species complex</taxon>
    </lineage>
</organism>
<evidence type="ECO:0000255" key="1">
    <source>
        <dbReference type="HAMAP-Rule" id="MF_01537"/>
    </source>
</evidence>
<evidence type="ECO:0000305" key="2"/>
<keyword id="KW-0328">Glycosyltransferase</keyword>
<keyword id="KW-1185">Reference proteome</keyword>
<keyword id="KW-0808">Transferase</keyword>
<sequence>MTTETIDGVRLTTKANVYFDGKCVSHSFALPDGTKKSVGVVLPATLTFGTAAAEIMECVGGSCEYRLDGSDEWKQSGPGERFQVPANSKFDIRVTEAYHYICHYA</sequence>
<gene>
    <name evidence="1" type="primary">ppnP</name>
    <name type="ordered locus">RSc2552</name>
    <name type="ORF">RS00731</name>
</gene>
<name>PPNP_RALN1</name>
<dbReference type="EC" id="2.4.2.1" evidence="1"/>
<dbReference type="EC" id="2.4.2.2" evidence="1"/>
<dbReference type="EMBL" id="AL646052">
    <property type="protein sequence ID" value="CAD16259.1"/>
    <property type="status" value="ALT_INIT"/>
    <property type="molecule type" value="Genomic_DNA"/>
</dbReference>
<dbReference type="RefSeq" id="WP_028860922.1">
    <property type="nucleotide sequence ID" value="NC_003295.1"/>
</dbReference>
<dbReference type="SMR" id="Q8XWC2"/>
<dbReference type="STRING" id="267608.RSc2552"/>
<dbReference type="EnsemblBacteria" id="CAD16259">
    <property type="protein sequence ID" value="CAD16259"/>
    <property type="gene ID" value="RSc2552"/>
</dbReference>
<dbReference type="KEGG" id="rso:RSc2552"/>
<dbReference type="PATRIC" id="fig|267608.8.peg.2595"/>
<dbReference type="eggNOG" id="COG3123">
    <property type="taxonomic scope" value="Bacteria"/>
</dbReference>
<dbReference type="HOGENOM" id="CLU_157874_1_0_4"/>
<dbReference type="Proteomes" id="UP000001436">
    <property type="component" value="Chromosome"/>
</dbReference>
<dbReference type="GO" id="GO:0005829">
    <property type="term" value="C:cytosol"/>
    <property type="evidence" value="ECO:0007669"/>
    <property type="project" value="TreeGrafter"/>
</dbReference>
<dbReference type="GO" id="GO:0047975">
    <property type="term" value="F:guanosine phosphorylase activity"/>
    <property type="evidence" value="ECO:0007669"/>
    <property type="project" value="UniProtKB-EC"/>
</dbReference>
<dbReference type="GO" id="GO:0004731">
    <property type="term" value="F:purine-nucleoside phosphorylase activity"/>
    <property type="evidence" value="ECO:0007669"/>
    <property type="project" value="UniProtKB-UniRule"/>
</dbReference>
<dbReference type="GO" id="GO:0009032">
    <property type="term" value="F:thymidine phosphorylase activity"/>
    <property type="evidence" value="ECO:0007669"/>
    <property type="project" value="UniProtKB-EC"/>
</dbReference>
<dbReference type="GO" id="GO:0004850">
    <property type="term" value="F:uridine phosphorylase activity"/>
    <property type="evidence" value="ECO:0007669"/>
    <property type="project" value="UniProtKB-EC"/>
</dbReference>
<dbReference type="CDD" id="cd20296">
    <property type="entry name" value="cupin_PpnP-like"/>
    <property type="match status" value="1"/>
</dbReference>
<dbReference type="Gene3D" id="2.60.120.10">
    <property type="entry name" value="Jelly Rolls"/>
    <property type="match status" value="1"/>
</dbReference>
<dbReference type="HAMAP" id="MF_01537">
    <property type="entry name" value="Nucleos_phosphorylase_PpnP"/>
    <property type="match status" value="1"/>
</dbReference>
<dbReference type="InterPro" id="IPR009664">
    <property type="entry name" value="Ppnp"/>
</dbReference>
<dbReference type="InterPro" id="IPR014710">
    <property type="entry name" value="RmlC-like_jellyroll"/>
</dbReference>
<dbReference type="InterPro" id="IPR011051">
    <property type="entry name" value="RmlC_Cupin_sf"/>
</dbReference>
<dbReference type="PANTHER" id="PTHR36540">
    <property type="entry name" value="PYRIMIDINE/PURINE NUCLEOSIDE PHOSPHORYLASE"/>
    <property type="match status" value="1"/>
</dbReference>
<dbReference type="PANTHER" id="PTHR36540:SF1">
    <property type="entry name" value="PYRIMIDINE_PURINE NUCLEOSIDE PHOSPHORYLASE"/>
    <property type="match status" value="1"/>
</dbReference>
<dbReference type="Pfam" id="PF06865">
    <property type="entry name" value="Ppnp"/>
    <property type="match status" value="1"/>
</dbReference>
<dbReference type="SUPFAM" id="SSF51182">
    <property type="entry name" value="RmlC-like cupins"/>
    <property type="match status" value="1"/>
</dbReference>